<protein>
    <recommendedName>
        <fullName>Cytidylate kinase</fullName>
        <shortName>CK</shortName>
        <ecNumber>2.7.4.25</ecNumber>
    </recommendedName>
    <alternativeName>
        <fullName>Cytidine monophosphate kinase</fullName>
        <shortName>CMP kinase</shortName>
    </alternativeName>
</protein>
<gene>
    <name type="primary">cmk</name>
    <name type="ordered locus">PH1265</name>
    <name type="ORF">PHBJ009</name>
</gene>
<keyword id="KW-0067">ATP-binding</keyword>
<keyword id="KW-0963">Cytoplasm</keyword>
<keyword id="KW-0418">Kinase</keyword>
<keyword id="KW-0547">Nucleotide-binding</keyword>
<keyword id="KW-0808">Transferase</keyword>
<evidence type="ECO:0000250" key="1"/>
<evidence type="ECO:0000305" key="2"/>
<organism>
    <name type="scientific">Pyrococcus horikoshii (strain ATCC 700860 / DSM 12428 / JCM 9974 / NBRC 100139 / OT-3)</name>
    <dbReference type="NCBI Taxonomy" id="70601"/>
    <lineage>
        <taxon>Archaea</taxon>
        <taxon>Methanobacteriati</taxon>
        <taxon>Methanobacteriota</taxon>
        <taxon>Thermococci</taxon>
        <taxon>Thermococcales</taxon>
        <taxon>Thermococcaceae</taxon>
        <taxon>Pyrococcus</taxon>
    </lineage>
</organism>
<sequence length="192" mass="21625">MPKDKLVITVSGLAGSGTTTLSKKIAEHYGLKHVYAGLIFRQMAKEKGMSLEEFQKYAELHPEIDREVDRRQIEAAKEGNVVIEGRLAGWMVKNADLKIWLDAPIRVRAERVAKREGISVEEAFMKIAEREMQNRKRYLNLYGIDINDLSIYDLIINTSKWSPEGVFAIVKAAIDHLDPVGDAGSKKEKEVG</sequence>
<reference key="1">
    <citation type="journal article" date="1998" name="DNA Res.">
        <title>Complete sequence and gene organization of the genome of a hyper-thermophilic archaebacterium, Pyrococcus horikoshii OT3.</title>
        <authorList>
            <person name="Kawarabayasi Y."/>
            <person name="Sawada M."/>
            <person name="Horikawa H."/>
            <person name="Haikawa Y."/>
            <person name="Hino Y."/>
            <person name="Yamamoto S."/>
            <person name="Sekine M."/>
            <person name="Baba S."/>
            <person name="Kosugi H."/>
            <person name="Hosoyama A."/>
            <person name="Nagai Y."/>
            <person name="Sakai M."/>
            <person name="Ogura K."/>
            <person name="Otsuka R."/>
            <person name="Nakazawa H."/>
            <person name="Takamiya M."/>
            <person name="Ohfuku Y."/>
            <person name="Funahashi T."/>
            <person name="Tanaka T."/>
            <person name="Kudoh Y."/>
            <person name="Yamazaki J."/>
            <person name="Kushida N."/>
            <person name="Oguchi A."/>
            <person name="Aoki K."/>
            <person name="Yoshizawa T."/>
            <person name="Nakamura Y."/>
            <person name="Robb F.T."/>
            <person name="Horikoshi K."/>
            <person name="Masuchi Y."/>
            <person name="Shizuya H."/>
            <person name="Kikuchi H."/>
        </authorList>
    </citation>
    <scope>NUCLEOTIDE SEQUENCE [LARGE SCALE GENOMIC DNA]</scope>
    <source>
        <strain>ATCC 700860 / DSM 12428 / JCM 9974 / NBRC 100139 / OT-3</strain>
    </source>
</reference>
<feature type="chain" id="PRO_0000132021" description="Cytidylate kinase">
    <location>
        <begin position="1"/>
        <end position="192"/>
    </location>
</feature>
<feature type="binding site" evidence="1">
    <location>
        <begin position="12"/>
        <end position="20"/>
    </location>
    <ligand>
        <name>ATP</name>
        <dbReference type="ChEBI" id="CHEBI:30616"/>
    </ligand>
</feature>
<dbReference type="EC" id="2.7.4.25"/>
<dbReference type="EMBL" id="BA000001">
    <property type="protein sequence ID" value="BAA30368.1"/>
    <property type="molecule type" value="Genomic_DNA"/>
</dbReference>
<dbReference type="PIR" id="F71071">
    <property type="entry name" value="F71071"/>
</dbReference>
<dbReference type="RefSeq" id="WP_010885356.1">
    <property type="nucleotide sequence ID" value="NC_000961.1"/>
</dbReference>
<dbReference type="SMR" id="O58988"/>
<dbReference type="STRING" id="70601.gene:9378230"/>
<dbReference type="EnsemblBacteria" id="BAA30368">
    <property type="protein sequence ID" value="BAA30368"/>
    <property type="gene ID" value="BAA30368"/>
</dbReference>
<dbReference type="GeneID" id="1443591"/>
<dbReference type="KEGG" id="pho:PH1265"/>
<dbReference type="eggNOG" id="arCOG01037">
    <property type="taxonomic scope" value="Archaea"/>
</dbReference>
<dbReference type="OrthoDB" id="31096at2157"/>
<dbReference type="Proteomes" id="UP000000752">
    <property type="component" value="Chromosome"/>
</dbReference>
<dbReference type="GO" id="GO:0005737">
    <property type="term" value="C:cytoplasm"/>
    <property type="evidence" value="ECO:0007669"/>
    <property type="project" value="UniProtKB-SubCell"/>
</dbReference>
<dbReference type="GO" id="GO:0005524">
    <property type="term" value="F:ATP binding"/>
    <property type="evidence" value="ECO:0007669"/>
    <property type="project" value="UniProtKB-UniRule"/>
</dbReference>
<dbReference type="GO" id="GO:0036430">
    <property type="term" value="F:CMP kinase activity"/>
    <property type="evidence" value="ECO:0007669"/>
    <property type="project" value="RHEA"/>
</dbReference>
<dbReference type="GO" id="GO:0036431">
    <property type="term" value="F:dCMP kinase activity"/>
    <property type="evidence" value="ECO:0007669"/>
    <property type="project" value="RHEA"/>
</dbReference>
<dbReference type="GO" id="GO:0006220">
    <property type="term" value="P:pyrimidine nucleotide metabolic process"/>
    <property type="evidence" value="ECO:0007669"/>
    <property type="project" value="UniProtKB-UniRule"/>
</dbReference>
<dbReference type="CDD" id="cd02020">
    <property type="entry name" value="CMPK"/>
    <property type="match status" value="1"/>
</dbReference>
<dbReference type="Gene3D" id="3.40.50.300">
    <property type="entry name" value="P-loop containing nucleotide triphosphate hydrolases"/>
    <property type="match status" value="1"/>
</dbReference>
<dbReference type="HAMAP" id="MF_00239">
    <property type="entry name" value="Cytidyl_kinase_type2"/>
    <property type="match status" value="1"/>
</dbReference>
<dbReference type="InterPro" id="IPR011892">
    <property type="entry name" value="Cyt_kin_arch"/>
</dbReference>
<dbReference type="InterPro" id="IPR011994">
    <property type="entry name" value="Cytidylate_kinase_dom"/>
</dbReference>
<dbReference type="InterPro" id="IPR027417">
    <property type="entry name" value="P-loop_NTPase"/>
</dbReference>
<dbReference type="NCBIfam" id="TIGR02173">
    <property type="entry name" value="cyt_kin_arch"/>
    <property type="match status" value="1"/>
</dbReference>
<dbReference type="Pfam" id="PF13189">
    <property type="entry name" value="Cytidylate_kin2"/>
    <property type="match status" value="1"/>
</dbReference>
<dbReference type="SUPFAM" id="SSF52540">
    <property type="entry name" value="P-loop containing nucleoside triphosphate hydrolases"/>
    <property type="match status" value="1"/>
</dbReference>
<name>KCY_PYRHO</name>
<proteinExistence type="inferred from homology"/>
<comment type="catalytic activity">
    <reaction>
        <text>CMP + ATP = CDP + ADP</text>
        <dbReference type="Rhea" id="RHEA:11600"/>
        <dbReference type="ChEBI" id="CHEBI:30616"/>
        <dbReference type="ChEBI" id="CHEBI:58069"/>
        <dbReference type="ChEBI" id="CHEBI:60377"/>
        <dbReference type="ChEBI" id="CHEBI:456216"/>
        <dbReference type="EC" id="2.7.4.25"/>
    </reaction>
</comment>
<comment type="catalytic activity">
    <reaction>
        <text>dCMP + ATP = dCDP + ADP</text>
        <dbReference type="Rhea" id="RHEA:25094"/>
        <dbReference type="ChEBI" id="CHEBI:30616"/>
        <dbReference type="ChEBI" id="CHEBI:57566"/>
        <dbReference type="ChEBI" id="CHEBI:58593"/>
        <dbReference type="ChEBI" id="CHEBI:456216"/>
        <dbReference type="EC" id="2.7.4.25"/>
    </reaction>
</comment>
<comment type="subcellular location">
    <subcellularLocation>
        <location evidence="1">Cytoplasm</location>
    </subcellularLocation>
</comment>
<comment type="similarity">
    <text evidence="2">Belongs to the cytidylate kinase family. Type 2 subfamily.</text>
</comment>
<accession>O58988</accession>